<proteinExistence type="evidence at protein level"/>
<feature type="chain" id="PRO_0000076542" description="Regulatory protein opaque-2">
    <location>
        <begin position="1"/>
        <end position="453"/>
    </location>
</feature>
<feature type="domain" description="bZIP" evidence="1">
    <location>
        <begin position="225"/>
        <end position="288"/>
    </location>
</feature>
<feature type="region of interest" description="Disordered" evidence="2">
    <location>
        <begin position="145"/>
        <end position="243"/>
    </location>
</feature>
<feature type="region of interest" description="Basic motif" evidence="1">
    <location>
        <begin position="228"/>
        <end position="251"/>
    </location>
</feature>
<feature type="region of interest" description="Leucine-zipper" evidence="1">
    <location>
        <begin position="253"/>
        <end position="274"/>
    </location>
</feature>
<feature type="compositionally biased region" description="Polar residues" evidence="2">
    <location>
        <begin position="146"/>
        <end position="175"/>
    </location>
</feature>
<feature type="compositionally biased region" description="Acidic residues" evidence="2">
    <location>
        <begin position="207"/>
        <end position="216"/>
    </location>
</feature>
<feature type="compositionally biased region" description="Basic and acidic residues" evidence="2">
    <location>
        <begin position="224"/>
        <end position="240"/>
    </location>
</feature>
<feature type="sequence conflict" description="In Ref. 2; CAA34614." evidence="5" ref="2">
    <original>E</original>
    <variation>EPEPEPE</variation>
    <location>
        <position position="26"/>
    </location>
</feature>
<feature type="sequence conflict" description="In Ref. 2; CAA34614." evidence="5" ref="2">
    <original>D</original>
    <variation>A</variation>
    <location>
        <position position="144"/>
    </location>
</feature>
<feature type="sequence conflict" description="In Ref. 2; CAA34614." evidence="5" ref="2">
    <original>K</original>
    <variation>KR</variation>
    <location>
        <position position="231"/>
    </location>
</feature>
<accession>P12959</accession>
<organism>
    <name type="scientific">Zea mays</name>
    <name type="common">Maize</name>
    <dbReference type="NCBI Taxonomy" id="4577"/>
    <lineage>
        <taxon>Eukaryota</taxon>
        <taxon>Viridiplantae</taxon>
        <taxon>Streptophyta</taxon>
        <taxon>Embryophyta</taxon>
        <taxon>Tracheophyta</taxon>
        <taxon>Spermatophyta</taxon>
        <taxon>Magnoliopsida</taxon>
        <taxon>Liliopsida</taxon>
        <taxon>Poales</taxon>
        <taxon>Poaceae</taxon>
        <taxon>PACMAD clade</taxon>
        <taxon>Panicoideae</taxon>
        <taxon>Andropogonodae</taxon>
        <taxon>Andropogoneae</taxon>
        <taxon>Tripsacinae</taxon>
        <taxon>Zea</taxon>
    </lineage>
</organism>
<comment type="function">
    <text evidence="3">Involved in the regulation of the endosperm-specific production of albumin b-32 and other zein proteins. It is a trans-acting transcriptional activator that binds to the consensus sequence 5'-GATGAYRTGR-3'.</text>
</comment>
<comment type="subunit">
    <text evidence="4">Interacts with the Dof zinc finger protein PBF.</text>
</comment>
<comment type="subcellular location">
    <subcellularLocation>
        <location>Nucleus</location>
    </subcellularLocation>
</comment>
<comment type="tissue specificity">
    <text evidence="4">Seed endosperm.</text>
</comment>
<comment type="similarity">
    <text evidence="5">Belongs to the bZIP family.</text>
</comment>
<evidence type="ECO:0000255" key="1">
    <source>
        <dbReference type="PROSITE-ProRule" id="PRU00978"/>
    </source>
</evidence>
<evidence type="ECO:0000256" key="2">
    <source>
        <dbReference type="SAM" id="MobiDB-lite"/>
    </source>
</evidence>
<evidence type="ECO:0000269" key="3">
    <source>
    </source>
</evidence>
<evidence type="ECO:0000269" key="4">
    <source>
    </source>
</evidence>
<evidence type="ECO:0000305" key="5"/>
<protein>
    <recommendedName>
        <fullName>Regulatory protein opaque-2</fullName>
    </recommendedName>
</protein>
<keyword id="KW-0010">Activator</keyword>
<keyword id="KW-0238">DNA-binding</keyword>
<keyword id="KW-0539">Nucleus</keyword>
<keyword id="KW-1185">Reference proteome</keyword>
<keyword id="KW-0804">Transcription</keyword>
<keyword id="KW-0805">Transcription regulation</keyword>
<reference key="1">
    <citation type="journal article" date="1989" name="Nucleic Acids Res.">
        <title>The sequence of the zein regulatory gene opaque-2 (O2) of Zea mays.</title>
        <authorList>
            <person name="Maddaloni M."/>
            <person name="di Fonzo N."/>
            <person name="Hartings H."/>
            <person name="Lazzaroni N."/>
            <person name="Salamini F."/>
            <person name="Thompson R.D."/>
            <person name="Motto M."/>
        </authorList>
    </citation>
    <scope>NUCLEOTIDE SEQUENCE [GENOMIC DNA]</scope>
    <source>
        <strain>AC 1503 GM 1407</strain>
    </source>
</reference>
<reference key="2">
    <citation type="journal article" date="1989" name="EMBO J.">
        <title>The O2 gene which regulates zein deposition in maize endosperm encodes a protein with structural homologies to transcriptional activators.</title>
        <authorList>
            <person name="Hartings H."/>
            <person name="Maddaloni M."/>
            <person name="Lazzaroni N."/>
            <person name="di Fonzo N."/>
            <person name="Motto M."/>
            <person name="Salamini F."/>
            <person name="Thompson R.D."/>
        </authorList>
    </citation>
    <scope>NUCLEOTIDE SEQUENCE [GENOMIC DNA]</scope>
    <source>
        <strain>AC 1503 GM 1407</strain>
        <tissue>Seed endosperm</tissue>
    </source>
</reference>
<reference key="3">
    <citation type="journal article" date="1991" name="EMBO J.">
        <title>The maize regulatory locus Opaque-2 encodes a DNA-binding protein which activates the transcription of the b-32 gene.</title>
        <authorList>
            <person name="Lohmer S."/>
            <person name="Maddaloni M."/>
            <person name="Motto M."/>
            <person name="di Fonzo N."/>
            <person name="Hartings H."/>
            <person name="Salamini F."/>
            <person name="Thompson R.D."/>
        </authorList>
    </citation>
    <scope>FUNCTION</scope>
</reference>
<reference key="4">
    <citation type="journal article" date="1997" name="Proc. Natl. Acad. Sci. U.S.A.">
        <title>A maize zinc-finger protein binds the prolamin box in zein gene promoters and interacts with the basic leucine zipper transcriptional activator Opaque-2.</title>
        <authorList>
            <person name="Vicente-Carbajosa J."/>
            <person name="Moose S.P."/>
            <person name="Parsons R.L."/>
            <person name="Schmidt R.J."/>
        </authorList>
    </citation>
    <scope>TISSUE SPECIFICITY</scope>
    <scope>INTERACTION WITH PBF</scope>
</reference>
<dbReference type="EMBL" id="X15544">
    <property type="protein sequence ID" value="CAA33550.1"/>
    <property type="molecule type" value="Genomic_DNA"/>
</dbReference>
<dbReference type="EMBL" id="X16618">
    <property type="protein sequence ID" value="CAA34614.1"/>
    <property type="molecule type" value="mRNA"/>
</dbReference>
<dbReference type="PIR" id="S06022">
    <property type="entry name" value="S06022"/>
</dbReference>
<dbReference type="SMR" id="P12959"/>
<dbReference type="STRING" id="4577.P12959"/>
<dbReference type="PaxDb" id="4577-GRMZM2G015534_P01"/>
<dbReference type="MaizeGDB" id="24976"/>
<dbReference type="eggNOG" id="ENOG502QS0A">
    <property type="taxonomic scope" value="Eukaryota"/>
</dbReference>
<dbReference type="InParanoid" id="P12959"/>
<dbReference type="Proteomes" id="UP000007305">
    <property type="component" value="Unplaced"/>
</dbReference>
<dbReference type="ExpressionAtlas" id="P12959">
    <property type="expression patterns" value="baseline and differential"/>
</dbReference>
<dbReference type="GO" id="GO:0005634">
    <property type="term" value="C:nucleus"/>
    <property type="evidence" value="ECO:0007669"/>
    <property type="project" value="UniProtKB-SubCell"/>
</dbReference>
<dbReference type="GO" id="GO:0003677">
    <property type="term" value="F:DNA binding"/>
    <property type="evidence" value="ECO:0007669"/>
    <property type="project" value="UniProtKB-KW"/>
</dbReference>
<dbReference type="GO" id="GO:0003700">
    <property type="term" value="F:DNA-binding transcription factor activity"/>
    <property type="evidence" value="ECO:0007669"/>
    <property type="project" value="InterPro"/>
</dbReference>
<dbReference type="CDD" id="cd14702">
    <property type="entry name" value="bZIP_plant_GBF1"/>
    <property type="match status" value="1"/>
</dbReference>
<dbReference type="FunFam" id="1.20.5.170:FF:000020">
    <property type="entry name" value="BZIP transcription factor"/>
    <property type="match status" value="1"/>
</dbReference>
<dbReference type="Gene3D" id="1.20.5.170">
    <property type="match status" value="1"/>
</dbReference>
<dbReference type="InterPro" id="IPR020983">
    <property type="entry name" value="Basic_leucine-zipper_C"/>
</dbReference>
<dbReference type="InterPro" id="IPR004827">
    <property type="entry name" value="bZIP"/>
</dbReference>
<dbReference type="InterPro" id="IPR045314">
    <property type="entry name" value="bZIP_plant_GBF1"/>
</dbReference>
<dbReference type="InterPro" id="IPR046347">
    <property type="entry name" value="bZIP_sf"/>
</dbReference>
<dbReference type="PANTHER" id="PTHR46408">
    <property type="entry name" value="BASIC LEUCINE ZIPPER 63"/>
    <property type="match status" value="1"/>
</dbReference>
<dbReference type="PANTHER" id="PTHR46408:SF7">
    <property type="entry name" value="REGULATORY PROTEIN OPAQUE-2"/>
    <property type="match status" value="1"/>
</dbReference>
<dbReference type="Pfam" id="PF00170">
    <property type="entry name" value="bZIP_1"/>
    <property type="match status" value="1"/>
</dbReference>
<dbReference type="Pfam" id="PF12498">
    <property type="entry name" value="bZIP_C"/>
    <property type="match status" value="1"/>
</dbReference>
<dbReference type="SMART" id="SM00338">
    <property type="entry name" value="BRLZ"/>
    <property type="match status" value="1"/>
</dbReference>
<dbReference type="SUPFAM" id="SSF57959">
    <property type="entry name" value="Leucine zipper domain"/>
    <property type="match status" value="1"/>
</dbReference>
<dbReference type="PROSITE" id="PS50217">
    <property type="entry name" value="BZIP"/>
    <property type="match status" value="1"/>
</dbReference>
<dbReference type="PROSITE" id="PS00036">
    <property type="entry name" value="BZIP_BASIC"/>
    <property type="match status" value="1"/>
</dbReference>
<name>OP2_MAIZE</name>
<sequence length="453" mass="49357">MEHVISMEEILGPFWELLPPPAPEPEREQPPVTGIVVGSVIDVAAAGHGDGDMMDQQHATEWTFERLLEEEALTTSTPPPVVVVPNSCCSGALNADRPPVMEEAVTMAPAAVSSAVVGDPMEYNAILRRKLEEDLEAFKMWRADSSVVTSDQRSQGSNNHTGGSSIRNNPVQNKLMNGEDPINNNHAQTAGLGVRLATSSSSRDPSPSDEDMDGEVEILGFKMPTEERVRKKESNRESARRSRYRKAAHLKELEDQVAQLKAENSCLLRRIAALNQKYNDANVDNRVLRADMETLRAKVKMGEDSLKRVIEMSSSVPSSMPISAPTPSSDAPVPPPPIRDSIVGYFSATAADDDASVGNGFLRLQAHQEPASMVVGGTLSATEMNRVAAATHCAGAMELIQTAMGSMPPTSASGSTPPPQIMSCWVQMGPYTWTCIRHCGFRDRWEHFICRRR</sequence>
<gene>
    <name type="primary">O2</name>
</gene>